<keyword id="KW-0968">Cytoplasmic vesicle</keyword>
<keyword id="KW-0221">Differentiation</keyword>
<keyword id="KW-1267">Proteomics identification</keyword>
<keyword id="KW-1185">Reference proteome</keyword>
<keyword id="KW-0744">Spermatogenesis</keyword>
<feature type="chain" id="PRO_0000325782" description="Sperm acrosome developmental regulator">
    <location>
        <begin position="1"/>
        <end position="206"/>
    </location>
</feature>
<feature type="region of interest" description="Disordered" evidence="1">
    <location>
        <begin position="180"/>
        <end position="206"/>
    </location>
</feature>
<proteinExistence type="evidence at protein level"/>
<accession>Q8IZ16</accession>
<evidence type="ECO:0000256" key="1">
    <source>
        <dbReference type="SAM" id="MobiDB-lite"/>
    </source>
</evidence>
<evidence type="ECO:0000269" key="2">
    <source>
    </source>
</evidence>
<evidence type="ECO:0000269" key="3">
    <source>
    </source>
</evidence>
<evidence type="ECO:0000269" key="4">
    <source>
    </source>
</evidence>
<evidence type="ECO:0000312" key="5">
    <source>
        <dbReference type="HGNC" id="HGNC:22135"/>
    </source>
</evidence>
<reference key="1">
    <citation type="journal article" date="2003" name="Science">
        <title>Human chromosome 7: DNA sequence and biology.</title>
        <authorList>
            <person name="Scherer S.W."/>
            <person name="Cheung J."/>
            <person name="MacDonald J.R."/>
            <person name="Osborne L.R."/>
            <person name="Nakabayashi K."/>
            <person name="Herbrick J.-A."/>
            <person name="Carson A.R."/>
            <person name="Parker-Katiraee L."/>
            <person name="Skaug J."/>
            <person name="Khaja R."/>
            <person name="Zhang J."/>
            <person name="Hudek A.K."/>
            <person name="Li M."/>
            <person name="Haddad M."/>
            <person name="Duggan G.E."/>
            <person name="Fernandez B.A."/>
            <person name="Kanematsu E."/>
            <person name="Gentles S."/>
            <person name="Christopoulos C.C."/>
            <person name="Choufani S."/>
            <person name="Kwasnicka D."/>
            <person name="Zheng X.H."/>
            <person name="Lai Z."/>
            <person name="Nusskern D.R."/>
            <person name="Zhang Q."/>
            <person name="Gu Z."/>
            <person name="Lu F."/>
            <person name="Zeesman S."/>
            <person name="Nowaczyk M.J."/>
            <person name="Teshima I."/>
            <person name="Chitayat D."/>
            <person name="Shuman C."/>
            <person name="Weksberg R."/>
            <person name="Zackai E.H."/>
            <person name="Grebe T.A."/>
            <person name="Cox S.R."/>
            <person name="Kirkpatrick S.J."/>
            <person name="Rahman N."/>
            <person name="Friedman J.M."/>
            <person name="Heng H.H.Q."/>
            <person name="Pelicci P.G."/>
            <person name="Lo-Coco F."/>
            <person name="Belloni E."/>
            <person name="Shaffer L.G."/>
            <person name="Pober B."/>
            <person name="Morton C.C."/>
            <person name="Gusella J.F."/>
            <person name="Bruns G.A.P."/>
            <person name="Korf B.R."/>
            <person name="Quade B.J."/>
            <person name="Ligon A.H."/>
            <person name="Ferguson H."/>
            <person name="Higgins A.W."/>
            <person name="Leach N.T."/>
            <person name="Herrick S.R."/>
            <person name="Lemyre E."/>
            <person name="Farra C.G."/>
            <person name="Kim H.-G."/>
            <person name="Summers A.M."/>
            <person name="Gripp K.W."/>
            <person name="Roberts W."/>
            <person name="Szatmari P."/>
            <person name="Winsor E.J.T."/>
            <person name="Grzeschik K.-H."/>
            <person name="Teebi A."/>
            <person name="Minassian B.A."/>
            <person name="Kere J."/>
            <person name="Armengol L."/>
            <person name="Pujana M.A."/>
            <person name="Estivill X."/>
            <person name="Wilson M.D."/>
            <person name="Koop B.F."/>
            <person name="Tosi S."/>
            <person name="Moore G.E."/>
            <person name="Boright A.P."/>
            <person name="Zlotorynski E."/>
            <person name="Kerem B."/>
            <person name="Kroisel P.M."/>
            <person name="Petek E."/>
            <person name="Oscier D.G."/>
            <person name="Mould S.J."/>
            <person name="Doehner H."/>
            <person name="Doehner K."/>
            <person name="Rommens J.M."/>
            <person name="Vincent J.B."/>
            <person name="Venter J.C."/>
            <person name="Li P.W."/>
            <person name="Mural R.J."/>
            <person name="Adams M.D."/>
            <person name="Tsui L.-C."/>
        </authorList>
    </citation>
    <scope>NUCLEOTIDE SEQUENCE [LARGE SCALE GENOMIC DNA]</scope>
</reference>
<reference key="2">
    <citation type="journal article" date="2004" name="Genome Res.">
        <title>The status, quality, and expansion of the NIH full-length cDNA project: the Mammalian Gene Collection (MGC).</title>
        <authorList>
            <consortium name="The MGC Project Team"/>
        </authorList>
    </citation>
    <scope>NUCLEOTIDE SEQUENCE [LARGE SCALE MRNA]</scope>
    <source>
        <tissue>Testis</tissue>
    </source>
</reference>
<reference key="3">
    <citation type="journal article" date="2013" name="Syst. Biol. Reprod. Med.">
        <title>Evaluation of potential protein biomarkers in patients with high sperm DNA damage.</title>
        <authorList>
            <person name="Behrouzi B."/>
            <person name="Kenigsberg S."/>
            <person name="Alladin N."/>
            <person name="Swanson S."/>
            <person name="Zicherman J."/>
            <person name="Hong S.H."/>
            <person name="Moskovtsev S.I."/>
            <person name="Librach C.L."/>
        </authorList>
    </citation>
    <scope>TISSUE SPECIFICITY</scope>
</reference>
<reference key="4">
    <citation type="journal article" date="2019" name="J. Proteome Res.">
        <title>Cell Type-Specific Expression of Testis Elevated Genes Based on Transcriptomics and Antibody-Based Proteomics.</title>
        <authorList>
            <person name="Pineau C."/>
            <person name="Hikmet F."/>
            <person name="Zhang C."/>
            <person name="Oksvold P."/>
            <person name="Chen S."/>
            <person name="Fagerberg L."/>
            <person name="Uhlen M."/>
            <person name="Lindskog C."/>
        </authorList>
    </citation>
    <scope>SUBCELLULAR LOCATION</scope>
</reference>
<reference key="5">
    <citation type="journal article" date="2020" name="Hum. Reprod.">
        <title>Exome sequencing reveals novel causes as well as new candidate genes for human globozoospermia.</title>
        <authorList>
            <person name="Oud M.S."/>
            <person name="Okutman O."/>
            <person name="Hendricks L.A.J."/>
            <person name="de Vries P.F."/>
            <person name="Houston B.J."/>
            <person name="Vissers L.E.L.M."/>
            <person name="O'Bryan M.K."/>
            <person name="Ramos L."/>
            <person name="Chemes H.E."/>
            <person name="Viville S."/>
            <person name="Veltman J.A."/>
        </authorList>
    </citation>
    <scope>SUBCELLULAR LOCATION</scope>
    <scope>FUNCTION</scope>
    <scope>INVOLVEMENT IN GLOBOZOOSPERMIA</scope>
</reference>
<protein>
    <recommendedName>
        <fullName evidence="5">Sperm acrosome developmental regulator</fullName>
    </recommendedName>
</protein>
<gene>
    <name evidence="5" type="primary">SPACDR</name>
    <name type="synonym">C7orf61</name>
</gene>
<organism>
    <name type="scientific">Homo sapiens</name>
    <name type="common">Human</name>
    <dbReference type="NCBI Taxonomy" id="9606"/>
    <lineage>
        <taxon>Eukaryota</taxon>
        <taxon>Metazoa</taxon>
        <taxon>Chordata</taxon>
        <taxon>Craniata</taxon>
        <taxon>Vertebrata</taxon>
        <taxon>Euteleostomi</taxon>
        <taxon>Mammalia</taxon>
        <taxon>Eutheria</taxon>
        <taxon>Euarchontoglires</taxon>
        <taxon>Primates</taxon>
        <taxon>Haplorrhini</taxon>
        <taxon>Catarrhini</taxon>
        <taxon>Hominidae</taxon>
        <taxon>Homo</taxon>
    </lineage>
</organism>
<name>SACDR_HUMAN</name>
<sequence>MVVVMKFFRWVRRAWQRIISWVFFWRQKIKPTISGHPDSKKHSLKKMEKTLQVVETLRLVELPKEAKPKLGESPELADPCVLAKTTEETEVELGQQGQSLLQLPRTAVKSVSTLMVSALQSGWQMCSWKSSVSSASVSSQVRTQSPLKTPEAELLWEVYLVLWAVRKHLRRLYRRQERHRRHHVRCHAAPRPNPAQSLKLDAQSPL</sequence>
<comment type="function">
    <text evidence="4">May play a role in acrosome formation and nucleus shaping during spermiogenesis.</text>
</comment>
<comment type="subcellular location">
    <subcellularLocation>
        <location evidence="3 4">Cytoplasmic vesicle</location>
        <location evidence="3 4">Secretory vesicle</location>
        <location evidence="3 4">Acrosome</location>
    </subcellularLocation>
    <text evidence="4">Detected in acrosome of round spermatids and spermatozoa.</text>
</comment>
<comment type="tissue specificity">
    <text evidence="2">Expressed in sperm (at protein level).</text>
</comment>
<comment type="disease">
    <text evidence="4">A variant causing a frameshift predicted to result in a premature termination codon has been found in a patient with globozoospermia.</text>
</comment>
<dbReference type="EMBL" id="CH236956">
    <property type="protein sequence ID" value="EAL23832.1"/>
    <property type="molecule type" value="Genomic_DNA"/>
</dbReference>
<dbReference type="EMBL" id="BC031966">
    <property type="protein sequence ID" value="AAH31966.1"/>
    <property type="molecule type" value="mRNA"/>
</dbReference>
<dbReference type="CCDS" id="CCDS47661.1"/>
<dbReference type="RefSeq" id="NP_001004323.1">
    <property type="nucleotide sequence ID" value="NM_001004323.3"/>
</dbReference>
<dbReference type="SMR" id="Q8IZ16"/>
<dbReference type="BioGRID" id="135516">
    <property type="interactions" value="1"/>
</dbReference>
<dbReference type="FunCoup" id="Q8IZ16">
    <property type="interactions" value="114"/>
</dbReference>
<dbReference type="STRING" id="9606.ENSP00000327732"/>
<dbReference type="GlyGen" id="Q8IZ16">
    <property type="glycosylation" value="1 site, 1 O-linked glycan (1 site)"/>
</dbReference>
<dbReference type="iPTMnet" id="Q8IZ16"/>
<dbReference type="PhosphoSitePlus" id="Q8IZ16"/>
<dbReference type="BioMuta" id="C7orf61"/>
<dbReference type="DMDM" id="74728413"/>
<dbReference type="jPOST" id="Q8IZ16"/>
<dbReference type="MassIVE" id="Q8IZ16"/>
<dbReference type="PaxDb" id="9606-ENSP00000327732"/>
<dbReference type="PeptideAtlas" id="Q8IZ16"/>
<dbReference type="ProteomicsDB" id="71268"/>
<dbReference type="Antibodypedia" id="30710">
    <property type="antibodies" value="69 antibodies from 13 providers"/>
</dbReference>
<dbReference type="DNASU" id="402573"/>
<dbReference type="Ensembl" id="ENST00000332375.4">
    <property type="protein sequence ID" value="ENSP00000327732.3"/>
    <property type="gene ID" value="ENSG00000185955.5"/>
</dbReference>
<dbReference type="GeneID" id="402573"/>
<dbReference type="KEGG" id="hsa:402573"/>
<dbReference type="MANE-Select" id="ENST00000332375.4">
    <property type="protein sequence ID" value="ENSP00000327732.3"/>
    <property type="RefSeq nucleotide sequence ID" value="NM_001004323.3"/>
    <property type="RefSeq protein sequence ID" value="NP_001004323.1"/>
</dbReference>
<dbReference type="UCSC" id="uc003uuz.1">
    <property type="organism name" value="human"/>
</dbReference>
<dbReference type="AGR" id="HGNC:22135"/>
<dbReference type="CTD" id="402573"/>
<dbReference type="GeneCards" id="SPACDR"/>
<dbReference type="HGNC" id="HGNC:22135">
    <property type="gene designation" value="SPACDR"/>
</dbReference>
<dbReference type="HPA" id="ENSG00000185955">
    <property type="expression patterns" value="Tissue enriched (testis)"/>
</dbReference>
<dbReference type="MIM" id="619782">
    <property type="type" value="gene"/>
</dbReference>
<dbReference type="neXtProt" id="NX_Q8IZ16"/>
<dbReference type="OpenTargets" id="ENSG00000185955"/>
<dbReference type="VEuPathDB" id="HostDB:ENSG00000185955"/>
<dbReference type="eggNOG" id="ENOG502TM6R">
    <property type="taxonomic scope" value="Eukaryota"/>
</dbReference>
<dbReference type="GeneTree" id="ENSGT00460000041667"/>
<dbReference type="HOGENOM" id="CLU_1360014_0_0_1"/>
<dbReference type="InParanoid" id="Q8IZ16"/>
<dbReference type="OMA" id="MRFFRWV"/>
<dbReference type="OrthoDB" id="9837318at2759"/>
<dbReference type="PAN-GO" id="Q8IZ16">
    <property type="GO annotations" value="0 GO annotations based on evolutionary models"/>
</dbReference>
<dbReference type="PhylomeDB" id="Q8IZ16"/>
<dbReference type="TreeFam" id="TF338725"/>
<dbReference type="PathwayCommons" id="Q8IZ16"/>
<dbReference type="SignaLink" id="Q8IZ16"/>
<dbReference type="BioGRID-ORCS" id="402573">
    <property type="hits" value="18 hits in 1137 CRISPR screens"/>
</dbReference>
<dbReference type="GenomeRNAi" id="402573"/>
<dbReference type="Pharos" id="Q8IZ16">
    <property type="development level" value="Tdark"/>
</dbReference>
<dbReference type="PRO" id="PR:Q8IZ16"/>
<dbReference type="Proteomes" id="UP000005640">
    <property type="component" value="Chromosome 7"/>
</dbReference>
<dbReference type="RNAct" id="Q8IZ16">
    <property type="molecule type" value="protein"/>
</dbReference>
<dbReference type="Bgee" id="ENSG00000185955">
    <property type="expression patterns" value="Expressed in left testis and 98 other cell types or tissues"/>
</dbReference>
<dbReference type="ExpressionAtlas" id="Q8IZ16">
    <property type="expression patterns" value="baseline and differential"/>
</dbReference>
<dbReference type="GO" id="GO:0001669">
    <property type="term" value="C:acrosomal vesicle"/>
    <property type="evidence" value="ECO:0000314"/>
    <property type="project" value="UniProtKB"/>
</dbReference>
<dbReference type="GO" id="GO:0005634">
    <property type="term" value="C:nucleus"/>
    <property type="evidence" value="ECO:0007005"/>
    <property type="project" value="UniProtKB"/>
</dbReference>
<dbReference type="GO" id="GO:0007286">
    <property type="term" value="P:spermatid development"/>
    <property type="evidence" value="ECO:0000315"/>
    <property type="project" value="UniProtKB"/>
</dbReference>
<dbReference type="InterPro" id="IPR031534">
    <property type="entry name" value="SPACDR"/>
</dbReference>
<dbReference type="PANTHER" id="PTHR39221">
    <property type="entry name" value="CHROMOSOME 7 OPEN READING FRAME 61"/>
    <property type="match status" value="1"/>
</dbReference>
<dbReference type="PANTHER" id="PTHR39221:SF1">
    <property type="entry name" value="SPERM ACROSOME DEVELOPMENTAL REGULATOR"/>
    <property type="match status" value="1"/>
</dbReference>
<dbReference type="Pfam" id="PF15775">
    <property type="entry name" value="DUF4703"/>
    <property type="match status" value="1"/>
</dbReference>